<dbReference type="EC" id="3.6.5.-" evidence="1"/>
<dbReference type="EMBL" id="AF353305">
    <property type="protein sequence ID" value="AAK31208.1"/>
    <property type="molecule type" value="mRNA"/>
</dbReference>
<dbReference type="EMBL" id="BC086376">
    <property type="protein sequence ID" value="AAH86376.1"/>
    <property type="molecule type" value="mRNA"/>
</dbReference>
<dbReference type="RefSeq" id="NP_598219.2">
    <property type="nucleotide sequence ID" value="NM_133535.2"/>
</dbReference>
<dbReference type="SMR" id="Q99MB4"/>
<dbReference type="FunCoup" id="Q99MB4">
    <property type="interactions" value="167"/>
</dbReference>
<dbReference type="STRING" id="10116.ENSRNOP00000021185"/>
<dbReference type="PhosphoSitePlus" id="Q99MB4"/>
<dbReference type="jPOST" id="Q99MB4"/>
<dbReference type="PaxDb" id="10116-ENSRNOP00000021185"/>
<dbReference type="Ensembl" id="ENSRNOT00000021185.8">
    <property type="protein sequence ID" value="ENSRNOP00000021185.3"/>
    <property type="gene ID" value="ENSRNOG00000015516.8"/>
</dbReference>
<dbReference type="GeneID" id="171057"/>
<dbReference type="KEGG" id="rno:171057"/>
<dbReference type="AGR" id="RGD:708495"/>
<dbReference type="CTD" id="55871"/>
<dbReference type="RGD" id="708495">
    <property type="gene designation" value="Cbwd1"/>
</dbReference>
<dbReference type="eggNOG" id="KOG2743">
    <property type="taxonomic scope" value="Eukaryota"/>
</dbReference>
<dbReference type="GeneTree" id="ENSGT00640000091523"/>
<dbReference type="HOGENOM" id="CLU_017452_0_1_1"/>
<dbReference type="InParanoid" id="Q99MB4"/>
<dbReference type="OMA" id="HSQGFET"/>
<dbReference type="OrthoDB" id="69492at9989"/>
<dbReference type="PhylomeDB" id="Q99MB4"/>
<dbReference type="TreeFam" id="TF332679"/>
<dbReference type="PRO" id="PR:Q99MB4"/>
<dbReference type="Proteomes" id="UP000002494">
    <property type="component" value="Chromosome 1"/>
</dbReference>
<dbReference type="Bgee" id="ENSRNOG00000015516">
    <property type="expression patterns" value="Expressed in testis and 19 other cell types or tissues"/>
</dbReference>
<dbReference type="GO" id="GO:0005737">
    <property type="term" value="C:cytoplasm"/>
    <property type="evidence" value="ECO:0000318"/>
    <property type="project" value="GO_Central"/>
</dbReference>
<dbReference type="GO" id="GO:0005634">
    <property type="term" value="C:nucleus"/>
    <property type="evidence" value="ECO:0000250"/>
    <property type="project" value="UniProtKB"/>
</dbReference>
<dbReference type="GO" id="GO:0005525">
    <property type="term" value="F:GTP binding"/>
    <property type="evidence" value="ECO:0007669"/>
    <property type="project" value="UniProtKB-KW"/>
</dbReference>
<dbReference type="GO" id="GO:0003924">
    <property type="term" value="F:GTPase activity"/>
    <property type="evidence" value="ECO:0000266"/>
    <property type="project" value="RGD"/>
</dbReference>
<dbReference type="GO" id="GO:0046872">
    <property type="term" value="F:metal ion binding"/>
    <property type="evidence" value="ECO:0007669"/>
    <property type="project" value="UniProtKB-KW"/>
</dbReference>
<dbReference type="GO" id="GO:0140827">
    <property type="term" value="F:zinc chaperone activity"/>
    <property type="evidence" value="ECO:0000266"/>
    <property type="project" value="RGD"/>
</dbReference>
<dbReference type="GO" id="GO:0006882">
    <property type="term" value="P:intracellular zinc ion homeostasis"/>
    <property type="evidence" value="ECO:0000266"/>
    <property type="project" value="RGD"/>
</dbReference>
<dbReference type="GO" id="GO:0001822">
    <property type="term" value="P:kidney development"/>
    <property type="evidence" value="ECO:0000266"/>
    <property type="project" value="RGD"/>
</dbReference>
<dbReference type="GO" id="GO:0051604">
    <property type="term" value="P:protein maturation"/>
    <property type="evidence" value="ECO:0000266"/>
    <property type="project" value="RGD"/>
</dbReference>
<dbReference type="CDD" id="cd03112">
    <property type="entry name" value="CobW-like"/>
    <property type="match status" value="1"/>
</dbReference>
<dbReference type="Gene3D" id="3.30.1220.10">
    <property type="entry name" value="CobW-like, C-terminal domain"/>
    <property type="match status" value="1"/>
</dbReference>
<dbReference type="Gene3D" id="3.40.50.300">
    <property type="entry name" value="P-loop containing nucleotide triphosphate hydrolases"/>
    <property type="match status" value="1"/>
</dbReference>
<dbReference type="InterPro" id="IPR036627">
    <property type="entry name" value="CobW-likC_sf"/>
</dbReference>
<dbReference type="InterPro" id="IPR011629">
    <property type="entry name" value="CobW-like_C"/>
</dbReference>
<dbReference type="InterPro" id="IPR003495">
    <property type="entry name" value="CobW/HypB/UreG_nucleotide-bd"/>
</dbReference>
<dbReference type="InterPro" id="IPR027417">
    <property type="entry name" value="P-loop_NTPase"/>
</dbReference>
<dbReference type="InterPro" id="IPR051316">
    <property type="entry name" value="Zinc-reg_GTPase_activator"/>
</dbReference>
<dbReference type="PANTHER" id="PTHR13748">
    <property type="entry name" value="COBW-RELATED"/>
    <property type="match status" value="1"/>
</dbReference>
<dbReference type="PANTHER" id="PTHR13748:SF31">
    <property type="entry name" value="ZINC-REGULATED GTPASE METALLOPROTEIN ACTIVATOR 1A-RELATED"/>
    <property type="match status" value="1"/>
</dbReference>
<dbReference type="Pfam" id="PF02492">
    <property type="entry name" value="cobW"/>
    <property type="match status" value="1"/>
</dbReference>
<dbReference type="Pfam" id="PF07683">
    <property type="entry name" value="CobW_C"/>
    <property type="match status" value="1"/>
</dbReference>
<dbReference type="SUPFAM" id="SSF90002">
    <property type="entry name" value="Hypothetical protein YjiA, C-terminal domain"/>
    <property type="match status" value="1"/>
</dbReference>
<dbReference type="SUPFAM" id="SSF52540">
    <property type="entry name" value="P-loop containing nucleoside triphosphate hydrolases"/>
    <property type="match status" value="1"/>
</dbReference>
<protein>
    <recommendedName>
        <fullName evidence="3">Zinc-regulated GTPase metalloprotein activator 1</fullName>
        <ecNumber evidence="1">3.6.5.-</ecNumber>
    </recommendedName>
    <alternativeName>
        <fullName evidence="3">Cobalamin synthase W domain-containing protein 1</fullName>
        <shortName evidence="3">COBW domain-containing protein 1</shortName>
    </alternativeName>
</protein>
<reference key="1">
    <citation type="submission" date="2001-02" db="EMBL/GenBank/DDBJ databases">
        <title>Molecular cloning and characterization of a new dopamine-inducible LIM-domain transcription factor from cultured astrocytes.</title>
        <authorList>
            <person name="Shi J."/>
            <person name="Cai W."/>
            <person name="Xie Y.Y."/>
            <person name="Ying K."/>
            <person name="Wu C."/>
            <person name="Zhou Z."/>
        </authorList>
    </citation>
    <scope>NUCLEOTIDE SEQUENCE [MRNA]</scope>
    <source>
        <strain>Sprague-Dawley</strain>
    </source>
</reference>
<reference key="2">
    <citation type="journal article" date="2004" name="Genome Res.">
        <title>The status, quality, and expansion of the NIH full-length cDNA project: the Mammalian Gene Collection (MGC).</title>
        <authorList>
            <consortium name="The MGC Project Team"/>
        </authorList>
    </citation>
    <scope>NUCLEOTIDE SEQUENCE [LARGE SCALE MRNA]</scope>
    <source>
        <tissue>Testis</tissue>
    </source>
</reference>
<name>ZNG1_RAT</name>
<organism>
    <name type="scientific">Rattus norvegicus</name>
    <name type="common">Rat</name>
    <dbReference type="NCBI Taxonomy" id="10116"/>
    <lineage>
        <taxon>Eukaryota</taxon>
        <taxon>Metazoa</taxon>
        <taxon>Chordata</taxon>
        <taxon>Craniata</taxon>
        <taxon>Vertebrata</taxon>
        <taxon>Euteleostomi</taxon>
        <taxon>Mammalia</taxon>
        <taxon>Eutheria</taxon>
        <taxon>Euarchontoglires</taxon>
        <taxon>Glires</taxon>
        <taxon>Rodentia</taxon>
        <taxon>Myomorpha</taxon>
        <taxon>Muroidea</taxon>
        <taxon>Muridae</taxon>
        <taxon>Murinae</taxon>
        <taxon>Rattus</taxon>
    </lineage>
</organism>
<feature type="chain" id="PRO_0000245525" description="Zinc-regulated GTPase metalloprotein activator 1">
    <location>
        <begin position="1"/>
        <end position="394"/>
    </location>
</feature>
<feature type="domain" description="CobW C-terminal">
    <location>
        <begin position="272"/>
        <end position="375"/>
    </location>
</feature>
<feature type="short sequence motif" description="psi-PxLVp motif" evidence="1">
    <location>
        <begin position="16"/>
        <end position="23"/>
    </location>
</feature>
<feature type="short sequence motif" description="CXCC motif" evidence="2">
    <location>
        <begin position="106"/>
        <end position="109"/>
    </location>
</feature>
<feature type="binding site" evidence="2">
    <location>
        <begin position="48"/>
        <end position="55"/>
    </location>
    <ligand>
        <name>GTP</name>
        <dbReference type="ChEBI" id="CHEBI:37565"/>
    </ligand>
</feature>
<feature type="binding site" evidence="1">
    <location>
        <position position="106"/>
    </location>
    <ligand>
        <name>Zn(2+)</name>
        <dbReference type="ChEBI" id="CHEBI:29105"/>
    </ligand>
</feature>
<feature type="binding site" evidence="1">
    <location>
        <position position="108"/>
    </location>
    <ligand>
        <name>Zn(2+)</name>
        <dbReference type="ChEBI" id="CHEBI:29105"/>
    </ligand>
</feature>
<feature type="binding site" evidence="2">
    <location>
        <begin position="109"/>
        <end position="113"/>
    </location>
    <ligand>
        <name>GTP</name>
        <dbReference type="ChEBI" id="CHEBI:37565"/>
    </ligand>
</feature>
<feature type="binding site" evidence="1">
    <location>
        <position position="109"/>
    </location>
    <ligand>
        <name>Zn(2+)</name>
        <dbReference type="ChEBI" id="CHEBI:29105"/>
    </ligand>
</feature>
<feature type="binding site" evidence="2">
    <location>
        <begin position="202"/>
        <end position="205"/>
    </location>
    <ligand>
        <name>GTP</name>
        <dbReference type="ChEBI" id="CHEBI:37565"/>
    </ligand>
</feature>
<feature type="sequence conflict" description="In Ref. 1; AAK31208." evidence="3" ref="1">
    <original>S</original>
    <variation>N</variation>
    <location>
        <position position="81"/>
    </location>
</feature>
<feature type="sequence conflict" description="In Ref. 1; AAK31208." evidence="3" ref="1">
    <original>W</original>
    <variation>R</variation>
    <location>
        <position position="99"/>
    </location>
</feature>
<proteinExistence type="evidence at transcript level"/>
<evidence type="ECO:0000250" key="1">
    <source>
        <dbReference type="UniProtKB" id="Q8VEH6"/>
    </source>
</evidence>
<evidence type="ECO:0000255" key="2"/>
<evidence type="ECO:0000305" key="3"/>
<sequence>MLPAMKTVEAEEEYAEDCPELVPIETKHQEKEENLDFIIKIPVTIVTGYLGAGKTTLLNYILTEQHNRKIAVILNEFGEGSAVEKSLAVSQGGELYEEWLELRNGCLCCSVKDNGLKAIENLMQKKGKFDYILLETTGLADPGAVASMFWVDAELGSDIYLDGIITVVDSKYGLKHLTEEKPDGLVNEATRQVALADMILINKTDLVSEEELNKLRTTIRSINGLGKVLETQRSRTHLSNILDLHAYDTLSGISLQKKLQHVSTAPHLDQSIVTVTFDVPGSAEEESLNVFIQNLLWEKNVKNKDGRCMEVIRLKGLVSIKDKPQQMIVQGIHELYELEESRVNWKDDAERACQLVFIGKNLDKDILQQLFITAVAETKEQTTAPGQDGACPPH</sequence>
<comment type="function">
    <text evidence="1">Zinc chaperone that directly transfers zinc cofactor to target metalloproteins, thereby activating them. Catalyzes zinc insertion into the active site of methionine aminopeptidase METAP1, which function to cleave the initiator methionine from polypeptides during or after protein translation. Mechanistically, the N-terminal psi-PxLVp motif binds to the C6H2-type zinc finger of inactive form of METAP1. After formation of the docked complex, zinc is transferred from the CXCC motif in the GTPase domain of ZNG1 to the zinc binding site in the peptidase domain of METAP1 in a process requiring GTP hydrolysis. GTP/GDP exchange is required for release of active METAP1.</text>
</comment>
<comment type="catalytic activity">
    <reaction evidence="1">
        <text>GTP + H2O = GDP + phosphate + H(+)</text>
        <dbReference type="Rhea" id="RHEA:19669"/>
        <dbReference type="ChEBI" id="CHEBI:15377"/>
        <dbReference type="ChEBI" id="CHEBI:15378"/>
        <dbReference type="ChEBI" id="CHEBI:37565"/>
        <dbReference type="ChEBI" id="CHEBI:43474"/>
        <dbReference type="ChEBI" id="CHEBI:58189"/>
    </reaction>
    <physiologicalReaction direction="left-to-right" evidence="1">
        <dbReference type="Rhea" id="RHEA:19670"/>
    </physiologicalReaction>
</comment>
<comment type="subcellular location">
    <subcellularLocation>
        <location evidence="1">Nucleus</location>
    </subcellularLocation>
</comment>
<comment type="similarity">
    <text evidence="3">Belongs to the SIMIBI class G3E GTPase family. ZNG1 subfamily.</text>
</comment>
<accession>Q99MB4</accession>
<accession>Q5RK12</accession>
<keyword id="KW-0143">Chaperone</keyword>
<keyword id="KW-0342">GTP-binding</keyword>
<keyword id="KW-0378">Hydrolase</keyword>
<keyword id="KW-0479">Metal-binding</keyword>
<keyword id="KW-0547">Nucleotide-binding</keyword>
<keyword id="KW-0539">Nucleus</keyword>
<keyword id="KW-1185">Reference proteome</keyword>
<keyword id="KW-0862">Zinc</keyword>
<gene>
    <name type="primary">Zng1</name>
    <name type="synonym">Cbwd1</name>
</gene>